<protein>
    <recommendedName>
        <fullName>R-phycoerythrin alpha chain</fullName>
    </recommendedName>
</protein>
<accession>O20206</accession>
<accession>Q194V3</accession>
<accession>Q1XDB9</accession>
<reference key="1">
    <citation type="online journal article" date="1997" name="Plant Gene Register">
        <title>Phycoerythrin encoding gene from Porphyra yezoensis.</title>
        <authorList>
            <person name="Kim B.-K."/>
            <person name="Fujita Y."/>
        </authorList>
        <locator>PGR97-041</locator>
    </citation>
    <scope>NUCLEOTIDE SEQUENCE [GENOMIC DNA]</scope>
    <source>
        <strain>NBD</strain>
    </source>
</reference>
<reference key="2">
    <citation type="submission" date="2006-06" db="EMBL/GenBank/DDBJ databases">
        <title>Phycoerythrin-encoding gene from Porphyra yezoensis isolate Qingdao.</title>
        <authorList>
            <person name="Wang M.Q."/>
            <person name="Mao Y.X."/>
        </authorList>
    </citation>
    <scope>NUCLEOTIDE SEQUENCE [GENOMIC DNA]</scope>
    <source>
        <strain>Qingdao</strain>
    </source>
</reference>
<reference key="3">
    <citation type="submission" date="2003-11" db="EMBL/GenBank/DDBJ databases">
        <title>Whole genome sequence of Porphyra yezoensis chloroplast.</title>
        <authorList>
            <person name="Kunimoto M."/>
            <person name="Morishima K."/>
            <person name="Yoshikawa M."/>
            <person name="Fukuda S."/>
            <person name="Kobayashi T."/>
            <person name="Kobayashi M."/>
            <person name="Okazaki T."/>
            <person name="Ohara I."/>
            <person name="Nakayama I."/>
        </authorList>
    </citation>
    <scope>NUCLEOTIDE SEQUENCE [LARGE SCALE GENOMIC DNA]</scope>
    <source>
        <strain>U-51</strain>
    </source>
</reference>
<dbReference type="EMBL" id="D89878">
    <property type="protein sequence ID" value="BAA21738.1"/>
    <property type="molecule type" value="Genomic_DNA"/>
</dbReference>
<dbReference type="EMBL" id="DQ666487">
    <property type="protein sequence ID" value="ABG01964.1"/>
    <property type="molecule type" value="Genomic_DNA"/>
</dbReference>
<dbReference type="EMBL" id="AP006715">
    <property type="protein sequence ID" value="BAE92492.1"/>
    <property type="molecule type" value="Genomic_DNA"/>
</dbReference>
<dbReference type="RefSeq" id="YP_537049.1">
    <property type="nucleotide sequence ID" value="NC_007932.1"/>
</dbReference>
<dbReference type="SMR" id="O20206"/>
<dbReference type="GeneID" id="3978751"/>
<dbReference type="GO" id="GO:0009535">
    <property type="term" value="C:chloroplast thylakoid membrane"/>
    <property type="evidence" value="ECO:0007669"/>
    <property type="project" value="UniProtKB-SubCell"/>
</dbReference>
<dbReference type="GO" id="GO:0030089">
    <property type="term" value="C:phycobilisome"/>
    <property type="evidence" value="ECO:0007669"/>
    <property type="project" value="UniProtKB-KW"/>
</dbReference>
<dbReference type="GO" id="GO:0015979">
    <property type="term" value="P:photosynthesis"/>
    <property type="evidence" value="ECO:0007669"/>
    <property type="project" value="UniProtKB-KW"/>
</dbReference>
<dbReference type="CDD" id="cd14769">
    <property type="entry name" value="PE_alpha"/>
    <property type="match status" value="1"/>
</dbReference>
<dbReference type="Gene3D" id="1.10.490.20">
    <property type="entry name" value="Phycocyanins"/>
    <property type="match status" value="1"/>
</dbReference>
<dbReference type="InterPro" id="IPR009050">
    <property type="entry name" value="Globin-like_sf"/>
</dbReference>
<dbReference type="InterPro" id="IPR012128">
    <property type="entry name" value="Phycobilisome_asu/bsu"/>
</dbReference>
<dbReference type="InterPro" id="IPR038719">
    <property type="entry name" value="Phycobilisome_asu/bsu_sf"/>
</dbReference>
<dbReference type="PANTHER" id="PTHR34011:SF4">
    <property type="entry name" value="C-PHYCOCYANIN ALPHA SUBUNIT"/>
    <property type="match status" value="1"/>
</dbReference>
<dbReference type="PANTHER" id="PTHR34011">
    <property type="entry name" value="PHYCOBILISOME 32.1 KDA LINKER POLYPEPTIDE, PHYCOCYANIN-ASSOCIATED, ROD 2-RELATED"/>
    <property type="match status" value="1"/>
</dbReference>
<dbReference type="Pfam" id="PF00502">
    <property type="entry name" value="Phycobilisome"/>
    <property type="match status" value="1"/>
</dbReference>
<dbReference type="PIRSF" id="PIRSF000081">
    <property type="entry name" value="Phycocyanin"/>
    <property type="match status" value="1"/>
</dbReference>
<dbReference type="SUPFAM" id="SSF46458">
    <property type="entry name" value="Globin-like"/>
    <property type="match status" value="1"/>
</dbReference>
<comment type="function">
    <text evidence="1">Light-harvesting photosynthetic bile pigment-protein from the phycobiliprotein complex.</text>
</comment>
<comment type="subunit">
    <text>Heterodimer of an alpha and a beta chain.</text>
</comment>
<comment type="subcellular location">
    <subcellularLocation>
        <location evidence="1">Plastid</location>
        <location evidence="1">Chloroplast thylakoid membrane</location>
        <topology evidence="1">Peripheral membrane protein</topology>
        <orientation evidence="1">Stromal side</orientation>
    </subcellularLocation>
    <text evidence="1">Forms the periphery of the phycobilisome rod.</text>
</comment>
<comment type="PTM">
    <text evidence="1">Contains two covalently linked bilin chromophores.</text>
</comment>
<comment type="similarity">
    <text evidence="2">Belongs to the phycobiliprotein family.</text>
</comment>
<evidence type="ECO:0000250" key="1"/>
<evidence type="ECO:0000305" key="2"/>
<feature type="chain" id="PRO_0000199180" description="R-phycoerythrin alpha chain">
    <location>
        <begin position="1"/>
        <end position="164"/>
    </location>
</feature>
<feature type="binding site" description="covalent" evidence="1">
    <location>
        <position position="82"/>
    </location>
    <ligand>
        <name>(2R,3E)-phycoerythrobilin</name>
        <dbReference type="ChEBI" id="CHEBI:85276"/>
        <label>1</label>
    </ligand>
</feature>
<feature type="binding site" description="covalent" evidence="1">
    <location>
        <position position="139"/>
    </location>
    <ligand>
        <name>(2R,3E)-phycoerythrobilin</name>
        <dbReference type="ChEBI" id="CHEBI:85276"/>
        <label>2</label>
    </ligand>
</feature>
<feature type="sequence variant" description="In strain: NBD.">
    <original>S</original>
    <variation>G</variation>
    <location>
        <position position="10"/>
    </location>
</feature>
<feature type="sequence variant" description="In strain: Qingdao.">
    <original>S</original>
    <variation>G</variation>
    <location>
        <position position="46"/>
    </location>
</feature>
<feature type="sequence variant" description="In strain: NBD.">
    <original>I</original>
    <variation>L</variation>
    <location>
        <position position="159"/>
    </location>
</feature>
<feature type="sequence variant" description="In strain: NBD.">
    <original>S</original>
    <variation>A</variation>
    <location>
        <position position="162"/>
    </location>
</feature>
<feature type="sequence variant" description="In strain: NBD.">
    <original>C</original>
    <variation>S</variation>
    <location>
        <position position="164"/>
    </location>
</feature>
<keyword id="KW-0042">Antenna complex</keyword>
<keyword id="KW-0089">Bile pigment</keyword>
<keyword id="KW-0150">Chloroplast</keyword>
<keyword id="KW-0157">Chromophore</keyword>
<keyword id="KW-0249">Electron transport</keyword>
<keyword id="KW-0472">Membrane</keyword>
<keyword id="KW-0602">Photosynthesis</keyword>
<keyword id="KW-0605">Phycobilisome</keyword>
<keyword id="KW-0934">Plastid</keyword>
<keyword id="KW-0793">Thylakoid</keyword>
<keyword id="KW-0813">Transport</keyword>
<proteinExistence type="inferred from homology"/>
<geneLocation type="chloroplast"/>
<sequence>MKSVITTTISAADAAGRFPSSSDLESVQGNIQRAAARLEAAEKLASNHEAVVKEAGDACFAKYSYLKNPGEAGDSQEKVNKCYRDVDHYMRLVNYCLVVGGTGPVDEWGIAGAREVYRTLNLPTSAYVASFAFARDRLCVPRDMSAQAGVEYAGNLDYIINSLC</sequence>
<name>PHEA_PYRYE</name>
<organism>
    <name type="scientific">Pyropia yezoensis</name>
    <name type="common">Susabi-nori</name>
    <name type="synonym">Porphyra yezoensis</name>
    <dbReference type="NCBI Taxonomy" id="2788"/>
    <lineage>
        <taxon>Eukaryota</taxon>
        <taxon>Rhodophyta</taxon>
        <taxon>Bangiophyceae</taxon>
        <taxon>Bangiales</taxon>
        <taxon>Bangiaceae</taxon>
        <taxon>Pyropia</taxon>
    </lineage>
</organism>
<gene>
    <name type="primary">cpeA</name>
</gene>